<accession>B4SKX6</accession>
<organism>
    <name type="scientific">Stenotrophomonas maltophilia (strain R551-3)</name>
    <dbReference type="NCBI Taxonomy" id="391008"/>
    <lineage>
        <taxon>Bacteria</taxon>
        <taxon>Pseudomonadati</taxon>
        <taxon>Pseudomonadota</taxon>
        <taxon>Gammaproteobacteria</taxon>
        <taxon>Lysobacterales</taxon>
        <taxon>Lysobacteraceae</taxon>
        <taxon>Stenotrophomonas</taxon>
        <taxon>Stenotrophomonas maltophilia group</taxon>
    </lineage>
</organism>
<feature type="chain" id="PRO_1000128603" description="Small ribosomal subunit protein uS14">
    <location>
        <begin position="1"/>
        <end position="101"/>
    </location>
</feature>
<feature type="region of interest" description="Disordered" evidence="2">
    <location>
        <begin position="48"/>
        <end position="69"/>
    </location>
</feature>
<feature type="compositionally biased region" description="Basic and acidic residues" evidence="2">
    <location>
        <begin position="51"/>
        <end position="68"/>
    </location>
</feature>
<dbReference type="EMBL" id="CP001111">
    <property type="protein sequence ID" value="ACF50474.1"/>
    <property type="molecule type" value="Genomic_DNA"/>
</dbReference>
<dbReference type="RefSeq" id="WP_004145363.1">
    <property type="nucleotide sequence ID" value="NC_011071.1"/>
</dbReference>
<dbReference type="SMR" id="B4SKX6"/>
<dbReference type="STRING" id="391008.Smal_0769"/>
<dbReference type="KEGG" id="smt:Smal_0769"/>
<dbReference type="eggNOG" id="COG0199">
    <property type="taxonomic scope" value="Bacteria"/>
</dbReference>
<dbReference type="HOGENOM" id="CLU_139869_0_1_6"/>
<dbReference type="OrthoDB" id="9810484at2"/>
<dbReference type="Proteomes" id="UP000001867">
    <property type="component" value="Chromosome"/>
</dbReference>
<dbReference type="GO" id="GO:0005737">
    <property type="term" value="C:cytoplasm"/>
    <property type="evidence" value="ECO:0007669"/>
    <property type="project" value="UniProtKB-ARBA"/>
</dbReference>
<dbReference type="GO" id="GO:0015935">
    <property type="term" value="C:small ribosomal subunit"/>
    <property type="evidence" value="ECO:0007669"/>
    <property type="project" value="TreeGrafter"/>
</dbReference>
<dbReference type="GO" id="GO:0019843">
    <property type="term" value="F:rRNA binding"/>
    <property type="evidence" value="ECO:0007669"/>
    <property type="project" value="UniProtKB-UniRule"/>
</dbReference>
<dbReference type="GO" id="GO:0003735">
    <property type="term" value="F:structural constituent of ribosome"/>
    <property type="evidence" value="ECO:0007669"/>
    <property type="project" value="InterPro"/>
</dbReference>
<dbReference type="GO" id="GO:0006412">
    <property type="term" value="P:translation"/>
    <property type="evidence" value="ECO:0007669"/>
    <property type="project" value="UniProtKB-UniRule"/>
</dbReference>
<dbReference type="FunFam" id="1.10.287.1480:FF:000001">
    <property type="entry name" value="30S ribosomal protein S14"/>
    <property type="match status" value="1"/>
</dbReference>
<dbReference type="Gene3D" id="1.10.287.1480">
    <property type="match status" value="1"/>
</dbReference>
<dbReference type="HAMAP" id="MF_00537">
    <property type="entry name" value="Ribosomal_uS14_1"/>
    <property type="match status" value="1"/>
</dbReference>
<dbReference type="InterPro" id="IPR001209">
    <property type="entry name" value="Ribosomal_uS14"/>
</dbReference>
<dbReference type="InterPro" id="IPR023036">
    <property type="entry name" value="Ribosomal_uS14_bac/plastid"/>
</dbReference>
<dbReference type="NCBIfam" id="NF006477">
    <property type="entry name" value="PRK08881.1"/>
    <property type="match status" value="1"/>
</dbReference>
<dbReference type="PANTHER" id="PTHR19836">
    <property type="entry name" value="30S RIBOSOMAL PROTEIN S14"/>
    <property type="match status" value="1"/>
</dbReference>
<dbReference type="PANTHER" id="PTHR19836:SF19">
    <property type="entry name" value="SMALL RIBOSOMAL SUBUNIT PROTEIN US14M"/>
    <property type="match status" value="1"/>
</dbReference>
<dbReference type="Pfam" id="PF00253">
    <property type="entry name" value="Ribosomal_S14"/>
    <property type="match status" value="1"/>
</dbReference>
<dbReference type="SUPFAM" id="SSF57716">
    <property type="entry name" value="Glucocorticoid receptor-like (DNA-binding domain)"/>
    <property type="match status" value="1"/>
</dbReference>
<comment type="function">
    <text evidence="1">Binds 16S rRNA, required for the assembly of 30S particles and may also be responsible for determining the conformation of the 16S rRNA at the A site.</text>
</comment>
<comment type="subunit">
    <text evidence="1">Part of the 30S ribosomal subunit. Contacts proteins S3 and S10.</text>
</comment>
<comment type="similarity">
    <text evidence="1">Belongs to the universal ribosomal protein uS14 family.</text>
</comment>
<sequence length="101" mass="11435">MAKTSMVNRDIKRKKLAEKYAVKRAALKKIVSSQDATYEEKIEAATKLSKLPRDSSPSRHRSRCELSGRPRGVYSKFGLGRNKLREATMRGDVPGLRKASW</sequence>
<name>RS14_STRM5</name>
<proteinExistence type="inferred from homology"/>
<reference key="1">
    <citation type="submission" date="2008-06" db="EMBL/GenBank/DDBJ databases">
        <title>Complete sequence of Stenotrophomonas maltophilia R551-3.</title>
        <authorList>
            <consortium name="US DOE Joint Genome Institute"/>
            <person name="Lucas S."/>
            <person name="Copeland A."/>
            <person name="Lapidus A."/>
            <person name="Glavina del Rio T."/>
            <person name="Dalin E."/>
            <person name="Tice H."/>
            <person name="Pitluck S."/>
            <person name="Chain P."/>
            <person name="Malfatti S."/>
            <person name="Shin M."/>
            <person name="Vergez L."/>
            <person name="Lang D."/>
            <person name="Schmutz J."/>
            <person name="Larimer F."/>
            <person name="Land M."/>
            <person name="Hauser L."/>
            <person name="Kyrpides N."/>
            <person name="Mikhailova N."/>
            <person name="Taghavi S."/>
            <person name="Monchy S."/>
            <person name="Newman L."/>
            <person name="Vangronsveld J."/>
            <person name="van der Lelie D."/>
            <person name="Richardson P."/>
        </authorList>
    </citation>
    <scope>NUCLEOTIDE SEQUENCE [LARGE SCALE GENOMIC DNA]</scope>
    <source>
        <strain>R551-3</strain>
    </source>
</reference>
<keyword id="KW-0687">Ribonucleoprotein</keyword>
<keyword id="KW-0689">Ribosomal protein</keyword>
<keyword id="KW-0694">RNA-binding</keyword>
<keyword id="KW-0699">rRNA-binding</keyword>
<evidence type="ECO:0000255" key="1">
    <source>
        <dbReference type="HAMAP-Rule" id="MF_00537"/>
    </source>
</evidence>
<evidence type="ECO:0000256" key="2">
    <source>
        <dbReference type="SAM" id="MobiDB-lite"/>
    </source>
</evidence>
<evidence type="ECO:0000305" key="3"/>
<gene>
    <name evidence="1" type="primary">rpsN</name>
    <name type="ordered locus">Smal_0769</name>
</gene>
<protein>
    <recommendedName>
        <fullName evidence="1">Small ribosomal subunit protein uS14</fullName>
    </recommendedName>
    <alternativeName>
        <fullName evidence="3">30S ribosomal protein S14</fullName>
    </alternativeName>
</protein>